<reference key="1">
    <citation type="journal article" date="1998" name="Science">
        <title>Genome sequence of the nematode C. elegans: a platform for investigating biology.</title>
        <authorList>
            <consortium name="The C. elegans sequencing consortium"/>
        </authorList>
    </citation>
    <scope>NUCLEOTIDE SEQUENCE [LARGE SCALE GENOMIC DNA]</scope>
    <source>
        <strain>Bristol N2</strain>
    </source>
</reference>
<comment type="function">
    <text evidence="1">Functions as a component of the Arp2/3 complex which is involved in regulation of actin polymerization and together with an activating nucleation-promoting factor (NPF) mediates the formation of branched actin networks.</text>
</comment>
<comment type="subunit">
    <text evidence="1">Component of the Arp2/3 complex composed of ARP2, ARP3, ARPC1B/p41-ARC, ARPC2/p34-ARC, ARPC3/p21-ARC, ARPC4/p20-ARC and ARPC5/p16-ARC.</text>
</comment>
<comment type="subcellular location">
    <subcellularLocation>
        <location evidence="1">Cytoplasm</location>
        <location evidence="1">Cytoskeleton</location>
    </subcellularLocation>
</comment>
<comment type="similarity">
    <text evidence="2">Belongs to the ARPC5 family.</text>
</comment>
<dbReference type="EMBL" id="FO080729">
    <property type="protein sequence ID" value="CCD66217.1"/>
    <property type="molecule type" value="Genomic_DNA"/>
</dbReference>
<dbReference type="PIR" id="T25640">
    <property type="entry name" value="T25640"/>
</dbReference>
<dbReference type="RefSeq" id="NP_491506.1">
    <property type="nucleotide sequence ID" value="NM_059105.3"/>
</dbReference>
<dbReference type="SMR" id="P91167"/>
<dbReference type="FunCoup" id="P91167">
    <property type="interactions" value="1653"/>
</dbReference>
<dbReference type="STRING" id="6239.C46H11.3.1"/>
<dbReference type="PaxDb" id="6239-C46H11.3"/>
<dbReference type="EnsemblMetazoa" id="C46H11.3.1">
    <property type="protein sequence ID" value="C46H11.3.1"/>
    <property type="gene ID" value="WBGene00016729"/>
</dbReference>
<dbReference type="GeneID" id="183522"/>
<dbReference type="KEGG" id="cel:CELE_C46H11.3"/>
<dbReference type="UCSC" id="C46H11.3">
    <property type="organism name" value="c. elegans"/>
</dbReference>
<dbReference type="AGR" id="WB:WBGene00016729"/>
<dbReference type="CTD" id="183522"/>
<dbReference type="WormBase" id="C46H11.3">
    <property type="protein sequence ID" value="CE08785"/>
    <property type="gene ID" value="WBGene00016729"/>
</dbReference>
<dbReference type="eggNOG" id="KOG3380">
    <property type="taxonomic scope" value="Eukaryota"/>
</dbReference>
<dbReference type="GeneTree" id="ENSGT00940000169405"/>
<dbReference type="HOGENOM" id="CLU_101888_1_1_1"/>
<dbReference type="InParanoid" id="P91167"/>
<dbReference type="OMA" id="YPFRNLM"/>
<dbReference type="OrthoDB" id="429520at2759"/>
<dbReference type="PhylomeDB" id="P91167"/>
<dbReference type="PRO" id="PR:P91167"/>
<dbReference type="Proteomes" id="UP000001940">
    <property type="component" value="Chromosome I"/>
</dbReference>
<dbReference type="Bgee" id="WBGene00016729">
    <property type="expression patterns" value="Expressed in embryo and 2 other cell types or tissues"/>
</dbReference>
<dbReference type="GO" id="GO:0005885">
    <property type="term" value="C:Arp2/3 protein complex"/>
    <property type="evidence" value="ECO:0000318"/>
    <property type="project" value="GO_Central"/>
</dbReference>
<dbReference type="GO" id="GO:0005737">
    <property type="term" value="C:cytoplasm"/>
    <property type="evidence" value="ECO:0000318"/>
    <property type="project" value="GO_Central"/>
</dbReference>
<dbReference type="GO" id="GO:0051015">
    <property type="term" value="F:actin filament binding"/>
    <property type="evidence" value="ECO:0000318"/>
    <property type="project" value="GO_Central"/>
</dbReference>
<dbReference type="GO" id="GO:0034314">
    <property type="term" value="P:Arp2/3 complex-mediated actin nucleation"/>
    <property type="evidence" value="ECO:0000318"/>
    <property type="project" value="GO_Central"/>
</dbReference>
<dbReference type="GO" id="GO:0016477">
    <property type="term" value="P:cell migration"/>
    <property type="evidence" value="ECO:0000318"/>
    <property type="project" value="GO_Central"/>
</dbReference>
<dbReference type="GO" id="GO:0030833">
    <property type="term" value="P:regulation of actin filament polymerization"/>
    <property type="evidence" value="ECO:0007669"/>
    <property type="project" value="InterPro"/>
</dbReference>
<dbReference type="FunFam" id="1.25.40.190:FF:000003">
    <property type="entry name" value="Actin-related protein 2/3 complex subunit 5"/>
    <property type="match status" value="1"/>
</dbReference>
<dbReference type="Gene3D" id="1.25.40.190">
    <property type="entry name" value="Actin-related protein 2/3 complex subunit 5"/>
    <property type="match status" value="1"/>
</dbReference>
<dbReference type="InterPro" id="IPR006789">
    <property type="entry name" value="ARPC5"/>
</dbReference>
<dbReference type="InterPro" id="IPR036743">
    <property type="entry name" value="ARPC5_sf"/>
</dbReference>
<dbReference type="PANTHER" id="PTHR12644">
    <property type="entry name" value="ARP2/3 COMPLEX 16 KD SUBUNIT P16-ARC"/>
    <property type="match status" value="1"/>
</dbReference>
<dbReference type="Pfam" id="PF04699">
    <property type="entry name" value="P16-Arc"/>
    <property type="match status" value="1"/>
</dbReference>
<dbReference type="PIRSF" id="PIRSF039096">
    <property type="entry name" value="p16-ARC"/>
    <property type="match status" value="1"/>
</dbReference>
<dbReference type="SUPFAM" id="SSF69103">
    <property type="entry name" value="Arp2/3 complex 16 kDa subunit ARPC5"/>
    <property type="match status" value="1"/>
</dbReference>
<evidence type="ECO:0000250" key="1"/>
<evidence type="ECO:0000305" key="2"/>
<sequence length="146" mass="16843">MYNTDYKKYNVDIFHPAHFEDIQEESADCGPNVQEVRQFLESNRLEYALQSVLLNPPFGHSEQELKNRAVLLVAEVIHAFRQTDIEESVHKLSNENGDILMKYIYKAMQLCSDSATCLSLLLWHSQLVSKFGQGSIVRVLSNRQRL</sequence>
<keyword id="KW-0009">Actin-binding</keyword>
<keyword id="KW-0963">Cytoplasm</keyword>
<keyword id="KW-0206">Cytoskeleton</keyword>
<keyword id="KW-1185">Reference proteome</keyword>
<protein>
    <recommendedName>
        <fullName>Probable actin-related protein 2/3 complex subunit 5</fullName>
    </recommendedName>
    <alternativeName>
        <fullName>Arp2/3 complex 16 kDa subunit</fullName>
        <shortName>p16-ARC</shortName>
    </alternativeName>
</protein>
<name>ARPC5_CAEEL</name>
<feature type="chain" id="PRO_0000124057" description="Probable actin-related protein 2/3 complex subunit 5">
    <location>
        <begin position="1"/>
        <end position="146"/>
    </location>
</feature>
<gene>
    <name type="ORF">C46H11.3</name>
</gene>
<accession>P91167</accession>
<proteinExistence type="inferred from homology"/>
<organism>
    <name type="scientific">Caenorhabditis elegans</name>
    <dbReference type="NCBI Taxonomy" id="6239"/>
    <lineage>
        <taxon>Eukaryota</taxon>
        <taxon>Metazoa</taxon>
        <taxon>Ecdysozoa</taxon>
        <taxon>Nematoda</taxon>
        <taxon>Chromadorea</taxon>
        <taxon>Rhabditida</taxon>
        <taxon>Rhabditina</taxon>
        <taxon>Rhabditomorpha</taxon>
        <taxon>Rhabditoidea</taxon>
        <taxon>Rhabditidae</taxon>
        <taxon>Peloderinae</taxon>
        <taxon>Caenorhabditis</taxon>
    </lineage>
</organism>